<sequence>MAKVPVYNIEGQQIGEIELNDSIFNVPINTHVLHQAVVAHLANRRQGTFAAKTRAEVRGGGRKPWRQKGTGRARQGSIRAPTWRKGGVVFAKKPRDFSIDLPKKVKRLALKCALSSKVKENNLIVLDRWDMNQYKTKEVLRVLKNLGLENQKALIVIPEKNEYLQKSTKNIPEVKTLQVGNLNVFDILKYDKFVILQDAVKKVEEVYA</sequence>
<organism>
    <name type="scientific">Caldicellulosiruptor bescii (strain ATCC BAA-1888 / DSM 6725 / KCTC 15123 / Z-1320)</name>
    <name type="common">Anaerocellum thermophilum</name>
    <dbReference type="NCBI Taxonomy" id="521460"/>
    <lineage>
        <taxon>Bacteria</taxon>
        <taxon>Bacillati</taxon>
        <taxon>Bacillota</taxon>
        <taxon>Bacillota incertae sedis</taxon>
        <taxon>Caldicellulosiruptorales</taxon>
        <taxon>Caldicellulosiruptoraceae</taxon>
        <taxon>Caldicellulosiruptor</taxon>
    </lineage>
</organism>
<protein>
    <recommendedName>
        <fullName evidence="1">Large ribosomal subunit protein uL4</fullName>
    </recommendedName>
    <alternativeName>
        <fullName evidence="3">50S ribosomal protein L4</fullName>
    </alternativeName>
</protein>
<feature type="chain" id="PRO_1000165982" description="Large ribosomal subunit protein uL4">
    <location>
        <begin position="1"/>
        <end position="208"/>
    </location>
</feature>
<feature type="region of interest" description="Disordered" evidence="2">
    <location>
        <begin position="58"/>
        <end position="77"/>
    </location>
</feature>
<feature type="compositionally biased region" description="Basic residues" evidence="2">
    <location>
        <begin position="60"/>
        <end position="71"/>
    </location>
</feature>
<proteinExistence type="inferred from homology"/>
<dbReference type="EMBL" id="CP001393">
    <property type="protein sequence ID" value="ACM60838.1"/>
    <property type="molecule type" value="Genomic_DNA"/>
</dbReference>
<dbReference type="RefSeq" id="WP_015908145.1">
    <property type="nucleotide sequence ID" value="NC_012034.1"/>
</dbReference>
<dbReference type="SMR" id="B9MKI0"/>
<dbReference type="STRING" id="521460.Athe_1744"/>
<dbReference type="GeneID" id="31773101"/>
<dbReference type="KEGG" id="ate:Athe_1744"/>
<dbReference type="eggNOG" id="COG0088">
    <property type="taxonomic scope" value="Bacteria"/>
</dbReference>
<dbReference type="HOGENOM" id="CLU_041575_5_2_9"/>
<dbReference type="Proteomes" id="UP000007723">
    <property type="component" value="Chromosome"/>
</dbReference>
<dbReference type="GO" id="GO:1990904">
    <property type="term" value="C:ribonucleoprotein complex"/>
    <property type="evidence" value="ECO:0007669"/>
    <property type="project" value="UniProtKB-KW"/>
</dbReference>
<dbReference type="GO" id="GO:0005840">
    <property type="term" value="C:ribosome"/>
    <property type="evidence" value="ECO:0007669"/>
    <property type="project" value="UniProtKB-KW"/>
</dbReference>
<dbReference type="GO" id="GO:0019843">
    <property type="term" value="F:rRNA binding"/>
    <property type="evidence" value="ECO:0007669"/>
    <property type="project" value="UniProtKB-UniRule"/>
</dbReference>
<dbReference type="GO" id="GO:0003735">
    <property type="term" value="F:structural constituent of ribosome"/>
    <property type="evidence" value="ECO:0007669"/>
    <property type="project" value="InterPro"/>
</dbReference>
<dbReference type="GO" id="GO:0006412">
    <property type="term" value="P:translation"/>
    <property type="evidence" value="ECO:0007669"/>
    <property type="project" value="UniProtKB-UniRule"/>
</dbReference>
<dbReference type="Gene3D" id="3.40.1370.10">
    <property type="match status" value="1"/>
</dbReference>
<dbReference type="HAMAP" id="MF_01328_B">
    <property type="entry name" value="Ribosomal_uL4_B"/>
    <property type="match status" value="1"/>
</dbReference>
<dbReference type="InterPro" id="IPR002136">
    <property type="entry name" value="Ribosomal_uL4"/>
</dbReference>
<dbReference type="InterPro" id="IPR013005">
    <property type="entry name" value="Ribosomal_uL4-like"/>
</dbReference>
<dbReference type="InterPro" id="IPR023574">
    <property type="entry name" value="Ribosomal_uL4_dom_sf"/>
</dbReference>
<dbReference type="NCBIfam" id="TIGR03953">
    <property type="entry name" value="rplD_bact"/>
    <property type="match status" value="1"/>
</dbReference>
<dbReference type="PANTHER" id="PTHR10746">
    <property type="entry name" value="50S RIBOSOMAL PROTEIN L4"/>
    <property type="match status" value="1"/>
</dbReference>
<dbReference type="PANTHER" id="PTHR10746:SF6">
    <property type="entry name" value="LARGE RIBOSOMAL SUBUNIT PROTEIN UL4M"/>
    <property type="match status" value="1"/>
</dbReference>
<dbReference type="Pfam" id="PF00573">
    <property type="entry name" value="Ribosomal_L4"/>
    <property type="match status" value="1"/>
</dbReference>
<dbReference type="SUPFAM" id="SSF52166">
    <property type="entry name" value="Ribosomal protein L4"/>
    <property type="match status" value="1"/>
</dbReference>
<gene>
    <name evidence="1" type="primary">rplD</name>
    <name type="ordered locus">Athe_1744</name>
</gene>
<evidence type="ECO:0000255" key="1">
    <source>
        <dbReference type="HAMAP-Rule" id="MF_01328"/>
    </source>
</evidence>
<evidence type="ECO:0000256" key="2">
    <source>
        <dbReference type="SAM" id="MobiDB-lite"/>
    </source>
</evidence>
<evidence type="ECO:0000305" key="3"/>
<accession>B9MKI0</accession>
<reference key="1">
    <citation type="submission" date="2009-01" db="EMBL/GenBank/DDBJ databases">
        <title>Complete sequence of chromosome of Caldicellulosiruptor becscii DSM 6725.</title>
        <authorList>
            <person name="Lucas S."/>
            <person name="Copeland A."/>
            <person name="Lapidus A."/>
            <person name="Glavina del Rio T."/>
            <person name="Tice H."/>
            <person name="Bruce D."/>
            <person name="Goodwin L."/>
            <person name="Pitluck S."/>
            <person name="Sims D."/>
            <person name="Meincke L."/>
            <person name="Brettin T."/>
            <person name="Detter J.C."/>
            <person name="Han C."/>
            <person name="Larimer F."/>
            <person name="Land M."/>
            <person name="Hauser L."/>
            <person name="Kyrpides N."/>
            <person name="Ovchinnikova G."/>
            <person name="Kataeva I."/>
            <person name="Adams M.W.W."/>
        </authorList>
    </citation>
    <scope>NUCLEOTIDE SEQUENCE [LARGE SCALE GENOMIC DNA]</scope>
    <source>
        <strain>ATCC BAA-1888 / DSM 6725 / KCTC 15123 / Z-1320</strain>
    </source>
</reference>
<comment type="function">
    <text evidence="1">One of the primary rRNA binding proteins, this protein initially binds near the 5'-end of the 23S rRNA. It is important during the early stages of 50S assembly. It makes multiple contacts with different domains of the 23S rRNA in the assembled 50S subunit and ribosome.</text>
</comment>
<comment type="function">
    <text evidence="1">Forms part of the polypeptide exit tunnel.</text>
</comment>
<comment type="subunit">
    <text evidence="1">Part of the 50S ribosomal subunit.</text>
</comment>
<comment type="similarity">
    <text evidence="1">Belongs to the universal ribosomal protein uL4 family.</text>
</comment>
<name>RL4_CALBD</name>
<keyword id="KW-0687">Ribonucleoprotein</keyword>
<keyword id="KW-0689">Ribosomal protein</keyword>
<keyword id="KW-0694">RNA-binding</keyword>
<keyword id="KW-0699">rRNA-binding</keyword>